<keyword id="KW-1003">Cell membrane</keyword>
<keyword id="KW-0472">Membrane</keyword>
<keyword id="KW-1185">Reference proteome</keyword>
<comment type="function">
    <text evidence="1">Could be involved in insertion of integral membrane proteins into the membrane.</text>
</comment>
<comment type="subcellular location">
    <subcellularLocation>
        <location evidence="1">Cell membrane</location>
        <topology evidence="1">Peripheral membrane protein</topology>
        <orientation evidence="1">Cytoplasmic side</orientation>
    </subcellularLocation>
</comment>
<comment type="similarity">
    <text evidence="1">Belongs to the UPF0161 family.</text>
</comment>
<reference key="1">
    <citation type="submission" date="2008-01" db="EMBL/GenBank/DDBJ databases">
        <title>Complete sequence of Thermoanaerobacter pseudethanolicus 39E.</title>
        <authorList>
            <person name="Copeland A."/>
            <person name="Lucas S."/>
            <person name="Lapidus A."/>
            <person name="Barry K."/>
            <person name="Glavina del Rio T."/>
            <person name="Dalin E."/>
            <person name="Tice H."/>
            <person name="Pitluck S."/>
            <person name="Bruce D."/>
            <person name="Goodwin L."/>
            <person name="Saunders E."/>
            <person name="Brettin T."/>
            <person name="Detter J.C."/>
            <person name="Han C."/>
            <person name="Schmutz J."/>
            <person name="Larimer F."/>
            <person name="Land M."/>
            <person name="Hauser L."/>
            <person name="Kyrpides N."/>
            <person name="Lykidis A."/>
            <person name="Hemme C."/>
            <person name="Fields M.W."/>
            <person name="He Z."/>
            <person name="Zhou J."/>
            <person name="Richardson P."/>
        </authorList>
    </citation>
    <scope>NUCLEOTIDE SEQUENCE [LARGE SCALE GENOMIC DNA]</scope>
    <source>
        <strain>ATCC 33223 / DSM 2355 / 39E</strain>
    </source>
</reference>
<feature type="chain" id="PRO_1000197796" description="Putative membrane protein insertion efficiency factor">
    <location>
        <begin position="1"/>
        <end position="69"/>
    </location>
</feature>
<name>YIDD_THEP3</name>
<dbReference type="EMBL" id="CP000924">
    <property type="protein sequence ID" value="ABY95914.1"/>
    <property type="molecule type" value="Genomic_DNA"/>
</dbReference>
<dbReference type="STRING" id="340099.Teth39_2293"/>
<dbReference type="KEGG" id="tpd:Teth39_2293"/>
<dbReference type="eggNOG" id="COG0759">
    <property type="taxonomic scope" value="Bacteria"/>
</dbReference>
<dbReference type="HOGENOM" id="CLU_144811_6_0_9"/>
<dbReference type="Proteomes" id="UP000002156">
    <property type="component" value="Chromosome"/>
</dbReference>
<dbReference type="GO" id="GO:0005886">
    <property type="term" value="C:plasma membrane"/>
    <property type="evidence" value="ECO:0007669"/>
    <property type="project" value="UniProtKB-SubCell"/>
</dbReference>
<dbReference type="HAMAP" id="MF_00386">
    <property type="entry name" value="UPF0161_YidD"/>
    <property type="match status" value="1"/>
</dbReference>
<dbReference type="InterPro" id="IPR002696">
    <property type="entry name" value="Membr_insert_effic_factor_YidD"/>
</dbReference>
<dbReference type="NCBIfam" id="TIGR00278">
    <property type="entry name" value="membrane protein insertion efficiency factor YidD"/>
    <property type="match status" value="1"/>
</dbReference>
<dbReference type="PANTHER" id="PTHR33383">
    <property type="entry name" value="MEMBRANE PROTEIN INSERTION EFFICIENCY FACTOR-RELATED"/>
    <property type="match status" value="1"/>
</dbReference>
<dbReference type="PANTHER" id="PTHR33383:SF1">
    <property type="entry name" value="MEMBRANE PROTEIN INSERTION EFFICIENCY FACTOR-RELATED"/>
    <property type="match status" value="1"/>
</dbReference>
<dbReference type="Pfam" id="PF01809">
    <property type="entry name" value="YidD"/>
    <property type="match status" value="1"/>
</dbReference>
<dbReference type="SMART" id="SM01234">
    <property type="entry name" value="Haemolytic"/>
    <property type="match status" value="1"/>
</dbReference>
<evidence type="ECO:0000255" key="1">
    <source>
        <dbReference type="HAMAP-Rule" id="MF_00386"/>
    </source>
</evidence>
<gene>
    <name type="ordered locus">Teth39_2293</name>
</gene>
<sequence length="69" mass="8052">MKNVVIFLIKLYQRYISPMKPRSCRFYPTCSQYSIEAISKYGLLKGGIMSIWRILRCNPFNPGGYDPVK</sequence>
<organism>
    <name type="scientific">Thermoanaerobacter pseudethanolicus (strain ATCC 33223 / 39E)</name>
    <name type="common">Clostridium thermohydrosulfuricum</name>
    <dbReference type="NCBI Taxonomy" id="340099"/>
    <lineage>
        <taxon>Bacteria</taxon>
        <taxon>Bacillati</taxon>
        <taxon>Bacillota</taxon>
        <taxon>Clostridia</taxon>
        <taxon>Thermoanaerobacterales</taxon>
        <taxon>Thermoanaerobacteraceae</taxon>
        <taxon>Thermoanaerobacter</taxon>
    </lineage>
</organism>
<proteinExistence type="inferred from homology"/>
<protein>
    <recommendedName>
        <fullName evidence="1">Putative membrane protein insertion efficiency factor</fullName>
    </recommendedName>
</protein>
<accession>B0K8I2</accession>